<feature type="chain" id="PRO_1000216193" description="Acyl carrier protein phosphodiesterase">
    <location>
        <begin position="1"/>
        <end position="193"/>
    </location>
</feature>
<comment type="function">
    <text evidence="1">Converts holo-ACP to apo-ACP by hydrolytic cleavage of the phosphopantetheine prosthetic group from ACP.</text>
</comment>
<comment type="catalytic activity">
    <reaction evidence="1">
        <text>holo-[ACP] + H2O = apo-[ACP] + (R)-4'-phosphopantetheine + H(+)</text>
        <dbReference type="Rhea" id="RHEA:20537"/>
        <dbReference type="Rhea" id="RHEA-COMP:9685"/>
        <dbReference type="Rhea" id="RHEA-COMP:9690"/>
        <dbReference type="ChEBI" id="CHEBI:15377"/>
        <dbReference type="ChEBI" id="CHEBI:15378"/>
        <dbReference type="ChEBI" id="CHEBI:29999"/>
        <dbReference type="ChEBI" id="CHEBI:61723"/>
        <dbReference type="ChEBI" id="CHEBI:64479"/>
        <dbReference type="EC" id="3.1.4.14"/>
    </reaction>
</comment>
<comment type="similarity">
    <text evidence="1">Belongs to the AcpH family.</text>
</comment>
<organism>
    <name type="scientific">Escherichia coli (strain K12 / MC4100 / BW2952)</name>
    <dbReference type="NCBI Taxonomy" id="595496"/>
    <lineage>
        <taxon>Bacteria</taxon>
        <taxon>Pseudomonadati</taxon>
        <taxon>Pseudomonadota</taxon>
        <taxon>Gammaproteobacteria</taxon>
        <taxon>Enterobacterales</taxon>
        <taxon>Enterobacteriaceae</taxon>
        <taxon>Escherichia</taxon>
    </lineage>
</organism>
<keyword id="KW-0275">Fatty acid biosynthesis</keyword>
<keyword id="KW-0276">Fatty acid metabolism</keyword>
<keyword id="KW-0378">Hydrolase</keyword>
<keyword id="KW-0444">Lipid biosynthesis</keyword>
<keyword id="KW-0443">Lipid metabolism</keyword>
<proteinExistence type="inferred from homology"/>
<protein>
    <recommendedName>
        <fullName evidence="1">Acyl carrier protein phosphodiesterase</fullName>
        <shortName evidence="1">ACP phosphodiesterase</shortName>
        <ecNumber evidence="1">3.1.4.14</ecNumber>
    </recommendedName>
</protein>
<gene>
    <name evidence="1" type="primary">acpH</name>
    <name type="ordered locus">BWG_0286</name>
</gene>
<dbReference type="EC" id="3.1.4.14" evidence="1"/>
<dbReference type="EMBL" id="CP001396">
    <property type="protein sequence ID" value="ACR62270.1"/>
    <property type="molecule type" value="Genomic_DNA"/>
</dbReference>
<dbReference type="RefSeq" id="WP_001009885.1">
    <property type="nucleotide sequence ID" value="NC_012759.1"/>
</dbReference>
<dbReference type="SMR" id="C4ZTG1"/>
<dbReference type="KEGG" id="ebw:BWG_0286"/>
<dbReference type="HOGENOM" id="CLU_099370_1_0_6"/>
<dbReference type="GO" id="GO:0008770">
    <property type="term" value="F:[acyl-carrier-protein] phosphodiesterase activity"/>
    <property type="evidence" value="ECO:0007669"/>
    <property type="project" value="UniProtKB-UniRule"/>
</dbReference>
<dbReference type="GO" id="GO:0006633">
    <property type="term" value="P:fatty acid biosynthetic process"/>
    <property type="evidence" value="ECO:0007669"/>
    <property type="project" value="UniProtKB-UniRule"/>
</dbReference>
<dbReference type="HAMAP" id="MF_01950">
    <property type="entry name" value="AcpH"/>
    <property type="match status" value="1"/>
</dbReference>
<dbReference type="InterPro" id="IPR007431">
    <property type="entry name" value="ACP_PD"/>
</dbReference>
<dbReference type="InterPro" id="IPR023491">
    <property type="entry name" value="ACP_phosphodiesterase_gpbac"/>
</dbReference>
<dbReference type="NCBIfam" id="NF007466">
    <property type="entry name" value="PRK10045.1"/>
    <property type="match status" value="1"/>
</dbReference>
<dbReference type="PANTHER" id="PTHR38764">
    <property type="entry name" value="ACYL CARRIER PROTEIN PHOSPHODIESTERASE"/>
    <property type="match status" value="1"/>
</dbReference>
<dbReference type="PANTHER" id="PTHR38764:SF1">
    <property type="entry name" value="ACYL CARRIER PROTEIN PHOSPHODIESTERASE"/>
    <property type="match status" value="1"/>
</dbReference>
<dbReference type="Pfam" id="PF04336">
    <property type="entry name" value="ACP_PD"/>
    <property type="match status" value="1"/>
</dbReference>
<dbReference type="PIRSF" id="PIRSF011489">
    <property type="entry name" value="DUF479"/>
    <property type="match status" value="1"/>
</dbReference>
<reference key="1">
    <citation type="journal article" date="2009" name="J. Bacteriol.">
        <title>Genomic sequencing reveals regulatory mutations and recombinational events in the widely used MC4100 lineage of Escherichia coli K-12.</title>
        <authorList>
            <person name="Ferenci T."/>
            <person name="Zhou Z."/>
            <person name="Betteridge T."/>
            <person name="Ren Y."/>
            <person name="Liu Y."/>
            <person name="Feng L."/>
            <person name="Reeves P.R."/>
            <person name="Wang L."/>
        </authorList>
    </citation>
    <scope>NUCLEOTIDE SEQUENCE [LARGE SCALE GENOMIC DNA]</scope>
    <source>
        <strain>K12 / MC4100 / BW2952</strain>
    </source>
</reference>
<evidence type="ECO:0000255" key="1">
    <source>
        <dbReference type="HAMAP-Rule" id="MF_01950"/>
    </source>
</evidence>
<sequence length="193" mass="22961">MNFLAHLHLAHLAESSLSGNLLADFVRGNPEESFPPDVVAGIHMHRRIDVLTDNLPEVREAREWFRSETRRVAPITLDVMWDHFLSRHWSQLSPDFPLQEFVCYAREQVMTILPDSPPRFINLNNYLWSEQWLVRYRDMDFIQNVLNGMASRRPRLDALRDSWYDLDAHYDALETRFWQFYPRMMAQASRKAL</sequence>
<accession>C4ZTG1</accession>
<name>ACPH_ECOBW</name>